<sequence>MEDDSLYLGGEWQFNHFSKLTSSRPDAAFAEIQRTSLPEKSPLSCETRVDLCDDLAPVARQLAPREKLPLSSRRPAAVGAGLQNMGNTCYVNASLQCLTYTPPLANYMLSREHSQTCHRHKGCMLCTMQAHITRALHNPGHVIQPSQALAAGFHRGKQEDAHEFLMFTVDAMKKACLPGHKQVDHHSKDTTLIHQIFGGYWRSQIKCLHCHGISDTFDPYLDIALDIQAAQSVQQALEQLVKPEELNGENAYHCGVCLQRAPASKTLTLHTSAKVLILVLKRFSDVTGNKIAKNVQYPECLDMQPYMSQPNTGPLVYVLYAVLVHAGWSCHNGHYFSYVKAQEGQWYKMDDAEVTASSITSVLSQQAYVLFYIQKSEWERHSESVSRGREPRALGAEDTDRRATQGELKRDHPCLQAPELDEHLVERATQESTLDHWKFLQEQNKTKPEFNVRKVEGTLPPDVLVIHQSKYKCGMKNHHPEQQSSLLNLSSTTPTHQESMNTGTLASLRGRARRSKGKNKHSKRALLVCQ</sequence>
<accession>D6RJB6</accession>
<organism>
    <name type="scientific">Homo sapiens</name>
    <name type="common">Human</name>
    <dbReference type="NCBI Taxonomy" id="9606"/>
    <lineage>
        <taxon>Eukaryota</taxon>
        <taxon>Metazoa</taxon>
        <taxon>Chordata</taxon>
        <taxon>Craniata</taxon>
        <taxon>Vertebrata</taxon>
        <taxon>Euteleostomi</taxon>
        <taxon>Mammalia</taxon>
        <taxon>Eutheria</taxon>
        <taxon>Euarchontoglires</taxon>
        <taxon>Primates</taxon>
        <taxon>Haplorrhini</taxon>
        <taxon>Catarrhini</taxon>
        <taxon>Hominidae</taxon>
        <taxon>Homo</taxon>
    </lineage>
</organism>
<gene>
    <name type="primary">USP17L20</name>
</gene>
<reference key="1">
    <citation type="journal article" date="2005" name="Nature">
        <title>Generation and annotation of the DNA sequences of human chromosomes 2 and 4.</title>
        <authorList>
            <person name="Hillier L.W."/>
            <person name="Graves T.A."/>
            <person name="Fulton R.S."/>
            <person name="Fulton L.A."/>
            <person name="Pepin K.H."/>
            <person name="Minx P."/>
            <person name="Wagner-McPherson C."/>
            <person name="Layman D."/>
            <person name="Wylie K."/>
            <person name="Sekhon M."/>
            <person name="Becker M.C."/>
            <person name="Fewell G.A."/>
            <person name="Delehaunty K.D."/>
            <person name="Miner T.L."/>
            <person name="Nash W.E."/>
            <person name="Kremitzki C."/>
            <person name="Oddy L."/>
            <person name="Du H."/>
            <person name="Sun H."/>
            <person name="Bradshaw-Cordum H."/>
            <person name="Ali J."/>
            <person name="Carter J."/>
            <person name="Cordes M."/>
            <person name="Harris A."/>
            <person name="Isak A."/>
            <person name="van Brunt A."/>
            <person name="Nguyen C."/>
            <person name="Du F."/>
            <person name="Courtney L."/>
            <person name="Kalicki J."/>
            <person name="Ozersky P."/>
            <person name="Abbott S."/>
            <person name="Armstrong J."/>
            <person name="Belter E.A."/>
            <person name="Caruso L."/>
            <person name="Cedroni M."/>
            <person name="Cotton M."/>
            <person name="Davidson T."/>
            <person name="Desai A."/>
            <person name="Elliott G."/>
            <person name="Erb T."/>
            <person name="Fronick C."/>
            <person name="Gaige T."/>
            <person name="Haakenson W."/>
            <person name="Haglund K."/>
            <person name="Holmes A."/>
            <person name="Harkins R."/>
            <person name="Kim K."/>
            <person name="Kruchowski S.S."/>
            <person name="Strong C.M."/>
            <person name="Grewal N."/>
            <person name="Goyea E."/>
            <person name="Hou S."/>
            <person name="Levy A."/>
            <person name="Martinka S."/>
            <person name="Mead K."/>
            <person name="McLellan M.D."/>
            <person name="Meyer R."/>
            <person name="Randall-Maher J."/>
            <person name="Tomlinson C."/>
            <person name="Dauphin-Kohlberg S."/>
            <person name="Kozlowicz-Reilly A."/>
            <person name="Shah N."/>
            <person name="Swearengen-Shahid S."/>
            <person name="Snider J."/>
            <person name="Strong J.T."/>
            <person name="Thompson J."/>
            <person name="Yoakum M."/>
            <person name="Leonard S."/>
            <person name="Pearman C."/>
            <person name="Trani L."/>
            <person name="Radionenko M."/>
            <person name="Waligorski J.E."/>
            <person name="Wang C."/>
            <person name="Rock S.M."/>
            <person name="Tin-Wollam A.-M."/>
            <person name="Maupin R."/>
            <person name="Latreille P."/>
            <person name="Wendl M.C."/>
            <person name="Yang S.-P."/>
            <person name="Pohl C."/>
            <person name="Wallis J.W."/>
            <person name="Spieth J."/>
            <person name="Bieri T.A."/>
            <person name="Berkowicz N."/>
            <person name="Nelson J.O."/>
            <person name="Osborne J."/>
            <person name="Ding L."/>
            <person name="Meyer R."/>
            <person name="Sabo A."/>
            <person name="Shotland Y."/>
            <person name="Sinha P."/>
            <person name="Wohldmann P.E."/>
            <person name="Cook L.L."/>
            <person name="Hickenbotham M.T."/>
            <person name="Eldred J."/>
            <person name="Williams D."/>
            <person name="Jones T.A."/>
            <person name="She X."/>
            <person name="Ciccarelli F.D."/>
            <person name="Izaurralde E."/>
            <person name="Taylor J."/>
            <person name="Schmutz J."/>
            <person name="Myers R.M."/>
            <person name="Cox D.R."/>
            <person name="Huang X."/>
            <person name="McPherson J.D."/>
            <person name="Mardis E.R."/>
            <person name="Clifton S.W."/>
            <person name="Warren W.C."/>
            <person name="Chinwalla A.T."/>
            <person name="Eddy S.R."/>
            <person name="Marra M.A."/>
            <person name="Ovcharenko I."/>
            <person name="Furey T.S."/>
            <person name="Miller W."/>
            <person name="Eichler E.E."/>
            <person name="Bork P."/>
            <person name="Suyama M."/>
            <person name="Torrents D."/>
            <person name="Waterston R.H."/>
            <person name="Wilson R.K."/>
        </authorList>
    </citation>
    <scope>NUCLEOTIDE SEQUENCE [LARGE SCALE GENOMIC DNA]</scope>
</reference>
<protein>
    <recommendedName>
        <fullName>Ubiquitin carboxyl-terminal hydrolase 17-like protein 20</fullName>
        <ecNumber>3.4.19.12</ecNumber>
    </recommendedName>
</protein>
<proteinExistence type="inferred from homology"/>
<evidence type="ECO:0000250" key="1"/>
<evidence type="ECO:0000255" key="2">
    <source>
        <dbReference type="PROSITE-ProRule" id="PRU10092"/>
    </source>
</evidence>
<evidence type="ECO:0000255" key="3">
    <source>
        <dbReference type="PROSITE-ProRule" id="PRU10093"/>
    </source>
</evidence>
<evidence type="ECO:0000256" key="4">
    <source>
        <dbReference type="SAM" id="MobiDB-lite"/>
    </source>
</evidence>
<evidence type="ECO:0000305" key="5"/>
<comment type="function">
    <text evidence="1">Deubiquitinating enzyme that removes conjugated ubiquitin from specific proteins to regulate different cellular processes that may include cell proliferation, progression through the cell cycle, apoptosis, cell migration, and the cellular response to viral infection.</text>
</comment>
<comment type="catalytic activity">
    <reaction>
        <text>Thiol-dependent hydrolysis of ester, thioester, amide, peptide and isopeptide bonds formed by the C-terminal Gly of ubiquitin (a 76-residue protein attached to proteins as an intracellular targeting signal).</text>
        <dbReference type="EC" id="3.4.19.12"/>
    </reaction>
</comment>
<comment type="subcellular location">
    <subcellularLocation>
        <location evidence="1">Nucleus</location>
    </subcellularLocation>
    <subcellularLocation>
        <location evidence="1">Endoplasmic reticulum</location>
    </subcellularLocation>
</comment>
<comment type="similarity">
    <text evidence="5">Belongs to the peptidase C19 family. USP17 subfamily.</text>
</comment>
<comment type="caution">
    <text evidence="5">The RS447 megasatellite DNA is a highly polymorphic conserved tandem repetitive sequence which contains a copy of the USP17 gene. It is present with an interindividual variation in copy number, ranging from 20 to 103, and can be found in the genome on chromosome 4 and chromosome 8. The high similarity between the UPS17-like genes makes it impossible to specifically assign data to a particular gene of the family. Oligonucleotides designed in RNAi experiments are for instance not specific for a given UPS17-like gene.</text>
</comment>
<name>U17LK_HUMAN</name>
<feature type="chain" id="PRO_0000421094" description="Ubiquitin carboxyl-terminal hydrolase 17-like protein 20">
    <location>
        <begin position="1"/>
        <end position="530"/>
    </location>
</feature>
<feature type="domain" description="USP">
    <location>
        <begin position="80"/>
        <end position="375"/>
    </location>
</feature>
<feature type="region of interest" description="Disordered" evidence="4">
    <location>
        <begin position="382"/>
        <end position="413"/>
    </location>
</feature>
<feature type="region of interest" description="Disordered" evidence="4">
    <location>
        <begin position="509"/>
        <end position="530"/>
    </location>
</feature>
<feature type="compositionally biased region" description="Basic and acidic residues" evidence="4">
    <location>
        <begin position="382"/>
        <end position="392"/>
    </location>
</feature>
<feature type="compositionally biased region" description="Basic and acidic residues" evidence="4">
    <location>
        <begin position="398"/>
        <end position="413"/>
    </location>
</feature>
<feature type="compositionally biased region" description="Basic residues" evidence="4">
    <location>
        <begin position="510"/>
        <end position="524"/>
    </location>
</feature>
<feature type="active site" description="Nucleophile" evidence="2 3">
    <location>
        <position position="89"/>
    </location>
</feature>
<feature type="active site" description="Proton acceptor" evidence="2 3">
    <location>
        <position position="334"/>
    </location>
</feature>
<dbReference type="EC" id="3.4.19.12"/>
<dbReference type="EMBL" id="AC108519">
    <property type="status" value="NOT_ANNOTATED_CDS"/>
    <property type="molecule type" value="Genomic_DNA"/>
</dbReference>
<dbReference type="CCDS" id="CCDS59461.1"/>
<dbReference type="RefSeq" id="NP_001243790.1">
    <property type="nucleotide sequence ID" value="NM_001256861.1"/>
</dbReference>
<dbReference type="SMR" id="D6RJB6"/>
<dbReference type="BioGRID" id="939102">
    <property type="interactions" value="1"/>
</dbReference>
<dbReference type="FunCoup" id="D6RJB6">
    <property type="interactions" value="444"/>
</dbReference>
<dbReference type="IntAct" id="D6RJB6">
    <property type="interactions" value="1"/>
</dbReference>
<dbReference type="STRING" id="9606.ENSP00000427264"/>
<dbReference type="MEROPS" id="C19.A82"/>
<dbReference type="MEROPS" id="C19.A95"/>
<dbReference type="BioMuta" id="USP17L20"/>
<dbReference type="jPOST" id="D6RJB6"/>
<dbReference type="MassIVE" id="D6RJB6"/>
<dbReference type="PaxDb" id="9606-ENSP00000427264"/>
<dbReference type="Antibodypedia" id="77568">
    <property type="antibodies" value="3 antibodies from 1 providers"/>
</dbReference>
<dbReference type="DNASU" id="100287441"/>
<dbReference type="Ensembl" id="ENST00000506151.1">
    <property type="protein sequence ID" value="ENSP00000427264.1"/>
    <property type="gene ID" value="ENSG00000250745.3"/>
</dbReference>
<dbReference type="GeneID" id="100287441"/>
<dbReference type="KEGG" id="hsa:100287441"/>
<dbReference type="MANE-Select" id="ENST00000506151.1">
    <property type="protein sequence ID" value="ENSP00000427264.1"/>
    <property type="RefSeq nucleotide sequence ID" value="NM_001256861.1"/>
    <property type="RefSeq protein sequence ID" value="NP_001243790.1"/>
</dbReference>
<dbReference type="UCSC" id="uc031sdn.1">
    <property type="organism name" value="human"/>
</dbReference>
<dbReference type="AGR" id="HGNC:44448"/>
<dbReference type="CTD" id="100287441"/>
<dbReference type="GeneCards" id="USP17L20"/>
<dbReference type="HGNC" id="HGNC:44448">
    <property type="gene designation" value="USP17L20"/>
</dbReference>
<dbReference type="HPA" id="ENSG00000250745">
    <property type="expression patterns" value="Not detected"/>
</dbReference>
<dbReference type="neXtProt" id="NX_D6RJB6"/>
<dbReference type="VEuPathDB" id="HostDB:ENSG00000250745"/>
<dbReference type="eggNOG" id="KOG1865">
    <property type="taxonomic scope" value="Eukaryota"/>
</dbReference>
<dbReference type="GeneTree" id="ENSGT00940000161948"/>
<dbReference type="InParanoid" id="D6RJB6"/>
<dbReference type="OMA" id="WRSEIKC"/>
<dbReference type="OrthoDB" id="9523253at2759"/>
<dbReference type="PAN-GO" id="D6RJB6">
    <property type="GO annotations" value="6 GO annotations based on evolutionary models"/>
</dbReference>
<dbReference type="PhylomeDB" id="D6RJB6"/>
<dbReference type="TreeFam" id="TF315281"/>
<dbReference type="PathwayCommons" id="D6RJB6"/>
<dbReference type="Reactome" id="R-HSA-5689880">
    <property type="pathway name" value="Ub-specific processing proteases"/>
</dbReference>
<dbReference type="SignaLink" id="D6RJB6"/>
<dbReference type="BioGRID-ORCS" id="100287441">
    <property type="hits" value="11 hits in 170 CRISPR screens"/>
</dbReference>
<dbReference type="GenomeRNAi" id="100287441"/>
<dbReference type="Pharos" id="D6RJB6">
    <property type="development level" value="Tdark"/>
</dbReference>
<dbReference type="PRO" id="PR:D6RJB6"/>
<dbReference type="Proteomes" id="UP000005640">
    <property type="component" value="Chromosome 4"/>
</dbReference>
<dbReference type="RNAct" id="D6RJB6">
    <property type="molecule type" value="protein"/>
</dbReference>
<dbReference type="Bgee" id="ENSG00000250745">
    <property type="expression patterns" value="Expressed in primary visual cortex and 15 other cell types or tissues"/>
</dbReference>
<dbReference type="GO" id="GO:0005829">
    <property type="term" value="C:cytosol"/>
    <property type="evidence" value="ECO:0000318"/>
    <property type="project" value="GO_Central"/>
</dbReference>
<dbReference type="GO" id="GO:0005783">
    <property type="term" value="C:endoplasmic reticulum"/>
    <property type="evidence" value="ECO:0007669"/>
    <property type="project" value="UniProtKB-SubCell"/>
</dbReference>
<dbReference type="GO" id="GO:0005634">
    <property type="term" value="C:nucleus"/>
    <property type="evidence" value="ECO:0000318"/>
    <property type="project" value="GO_Central"/>
</dbReference>
<dbReference type="GO" id="GO:0004843">
    <property type="term" value="F:cysteine-type deubiquitinase activity"/>
    <property type="evidence" value="ECO:0000318"/>
    <property type="project" value="GO_Central"/>
</dbReference>
<dbReference type="GO" id="GO:0016579">
    <property type="term" value="P:protein deubiquitination"/>
    <property type="evidence" value="ECO:0007669"/>
    <property type="project" value="InterPro"/>
</dbReference>
<dbReference type="GO" id="GO:0006508">
    <property type="term" value="P:proteolysis"/>
    <property type="evidence" value="ECO:0007669"/>
    <property type="project" value="UniProtKB-KW"/>
</dbReference>
<dbReference type="GO" id="GO:0042981">
    <property type="term" value="P:regulation of apoptotic process"/>
    <property type="evidence" value="ECO:0000318"/>
    <property type="project" value="GO_Central"/>
</dbReference>
<dbReference type="GO" id="GO:0031647">
    <property type="term" value="P:regulation of protein stability"/>
    <property type="evidence" value="ECO:0000318"/>
    <property type="project" value="GO_Central"/>
</dbReference>
<dbReference type="CDD" id="cd02661">
    <property type="entry name" value="Peptidase_C19E"/>
    <property type="match status" value="1"/>
</dbReference>
<dbReference type="FunFam" id="3.90.70.10:FF:000070">
    <property type="entry name" value="Ubiquitin carboxyl-terminal hydrolase 17-like protein 17"/>
    <property type="match status" value="1"/>
</dbReference>
<dbReference type="Gene3D" id="3.90.70.10">
    <property type="entry name" value="Cysteine proteinases"/>
    <property type="match status" value="1"/>
</dbReference>
<dbReference type="InterPro" id="IPR006861">
    <property type="entry name" value="HABP4_PAIRBP1-bd"/>
</dbReference>
<dbReference type="InterPro" id="IPR038765">
    <property type="entry name" value="Papain-like_cys_pep_sf"/>
</dbReference>
<dbReference type="InterPro" id="IPR050164">
    <property type="entry name" value="Peptidase_C19"/>
</dbReference>
<dbReference type="InterPro" id="IPR001394">
    <property type="entry name" value="Peptidase_C19_UCH"/>
</dbReference>
<dbReference type="InterPro" id="IPR018200">
    <property type="entry name" value="USP_CS"/>
</dbReference>
<dbReference type="InterPro" id="IPR028889">
    <property type="entry name" value="USP_dom"/>
</dbReference>
<dbReference type="PANTHER" id="PTHR24006:SF651">
    <property type="entry name" value="INACTIVE UBIQUITIN CARBOXYL-TERMINAL HYDROLASE 17-LIKE PROTEIN 4-RELATED"/>
    <property type="match status" value="1"/>
</dbReference>
<dbReference type="PANTHER" id="PTHR24006">
    <property type="entry name" value="UBIQUITIN CARBOXYL-TERMINAL HYDROLASE"/>
    <property type="match status" value="1"/>
</dbReference>
<dbReference type="Pfam" id="PF04774">
    <property type="entry name" value="HABP4_PAI-RBP1"/>
    <property type="match status" value="1"/>
</dbReference>
<dbReference type="Pfam" id="PF00443">
    <property type="entry name" value="UCH"/>
    <property type="match status" value="1"/>
</dbReference>
<dbReference type="SUPFAM" id="SSF54001">
    <property type="entry name" value="Cysteine proteinases"/>
    <property type="match status" value="1"/>
</dbReference>
<dbReference type="PROSITE" id="PS00972">
    <property type="entry name" value="USP_1"/>
    <property type="match status" value="1"/>
</dbReference>
<dbReference type="PROSITE" id="PS00973">
    <property type="entry name" value="USP_2"/>
    <property type="match status" value="1"/>
</dbReference>
<dbReference type="PROSITE" id="PS50235">
    <property type="entry name" value="USP_3"/>
    <property type="match status" value="1"/>
</dbReference>
<keyword id="KW-0256">Endoplasmic reticulum</keyword>
<keyword id="KW-0378">Hydrolase</keyword>
<keyword id="KW-0539">Nucleus</keyword>
<keyword id="KW-0645">Protease</keyword>
<keyword id="KW-1185">Reference proteome</keyword>
<keyword id="KW-0788">Thiol protease</keyword>
<keyword id="KW-0833">Ubl conjugation pathway</keyword>